<feature type="chain" id="PRO_1000021555" description="Histidine ammonia-lyase">
    <location>
        <begin position="1"/>
        <end position="507"/>
    </location>
</feature>
<feature type="modified residue" description="2,3-didehydroalanine (Ser)" evidence="1">
    <location>
        <position position="142"/>
    </location>
</feature>
<feature type="cross-link" description="5-imidazolinone (Ala-Gly)" evidence="1">
    <location>
        <begin position="141"/>
        <end position="143"/>
    </location>
</feature>
<sequence>MITLTPGHLTLPQLRRIARESVQLQLDPASFAKIDAGAKAVADIAAKGEPAYGINTGFGRLASTHIPHDQLELLQKNLVLSHAVGVGEPMARSSVRLLMALKLSSLGRGHSGIRREVMDALITLFNADVLPLIPVKGSVGASGDLAPLAHMSAVLLGVGEVFIRGERASALDGLRVAGLAPLTLQAKEGLALLNGTQASTALALDNMFAIEDLYRTALVAGALSVDAAAGSVKPFDARIHELRGHRGQIDAAASYRELLEGSPINQSHRDCDKVQDPYSLRCQPQVMGACLDQMRHAADVLLVEANAVSDNPLIFPDTGEVLSGGNFHAEPVAFAADNLALAAAEIGALAERRIALLIDATLSGLPPFLVRDGGVNSGFMIAHVTAAALASENKTLAHPASVDSLPTSANQEDHVSMATFAARKLADIADNTKHILAIELLAAAQGVDLRAPHHTSPKLAPVMETIRSKVAHYELDHYFAPDIAVIAQLVGERAFAKIAPFSFASEQ</sequence>
<comment type="catalytic activity">
    <reaction evidence="1">
        <text>L-histidine = trans-urocanate + NH4(+)</text>
        <dbReference type="Rhea" id="RHEA:21232"/>
        <dbReference type="ChEBI" id="CHEBI:17771"/>
        <dbReference type="ChEBI" id="CHEBI:28938"/>
        <dbReference type="ChEBI" id="CHEBI:57595"/>
        <dbReference type="EC" id="4.3.1.3"/>
    </reaction>
</comment>
<comment type="pathway">
    <text evidence="1">Amino-acid degradation; L-histidine degradation into L-glutamate; N-formimidoyl-L-glutamate from L-histidine: step 1/3.</text>
</comment>
<comment type="subcellular location">
    <subcellularLocation>
        <location evidence="1">Cytoplasm</location>
    </subcellularLocation>
</comment>
<comment type="PTM">
    <text evidence="1">Contains an active site 4-methylidene-imidazol-5-one (MIO), which is formed autocatalytically by cyclization and dehydration of residues Ala-Ser-Gly.</text>
</comment>
<comment type="similarity">
    <text evidence="1">Belongs to the PAL/histidase family.</text>
</comment>
<proteinExistence type="inferred from homology"/>
<name>HUTH_BURVG</name>
<reference key="1">
    <citation type="submission" date="2007-03" db="EMBL/GenBank/DDBJ databases">
        <title>Complete sequence of chromosome 1 of Burkholderia vietnamiensis G4.</title>
        <authorList>
            <consortium name="US DOE Joint Genome Institute"/>
            <person name="Copeland A."/>
            <person name="Lucas S."/>
            <person name="Lapidus A."/>
            <person name="Barry K."/>
            <person name="Detter J.C."/>
            <person name="Glavina del Rio T."/>
            <person name="Hammon N."/>
            <person name="Israni S."/>
            <person name="Dalin E."/>
            <person name="Tice H."/>
            <person name="Pitluck S."/>
            <person name="Chain P."/>
            <person name="Malfatti S."/>
            <person name="Shin M."/>
            <person name="Vergez L."/>
            <person name="Schmutz J."/>
            <person name="Larimer F."/>
            <person name="Land M."/>
            <person name="Hauser L."/>
            <person name="Kyrpides N."/>
            <person name="Tiedje J."/>
            <person name="Richardson P."/>
        </authorList>
    </citation>
    <scope>NUCLEOTIDE SEQUENCE [LARGE SCALE GENOMIC DNA]</scope>
    <source>
        <strain>G4 / LMG 22486</strain>
    </source>
</reference>
<keyword id="KW-0963">Cytoplasm</keyword>
<keyword id="KW-0369">Histidine metabolism</keyword>
<keyword id="KW-0456">Lyase</keyword>
<accession>A4JG46</accession>
<evidence type="ECO:0000255" key="1">
    <source>
        <dbReference type="HAMAP-Rule" id="MF_00229"/>
    </source>
</evidence>
<organism>
    <name type="scientific">Burkholderia vietnamiensis (strain G4 / LMG 22486)</name>
    <name type="common">Burkholderia cepacia (strain R1808)</name>
    <dbReference type="NCBI Taxonomy" id="269482"/>
    <lineage>
        <taxon>Bacteria</taxon>
        <taxon>Pseudomonadati</taxon>
        <taxon>Pseudomonadota</taxon>
        <taxon>Betaproteobacteria</taxon>
        <taxon>Burkholderiales</taxon>
        <taxon>Burkholderiaceae</taxon>
        <taxon>Burkholderia</taxon>
        <taxon>Burkholderia cepacia complex</taxon>
    </lineage>
</organism>
<protein>
    <recommendedName>
        <fullName evidence="1">Histidine ammonia-lyase</fullName>
        <shortName evidence="1">Histidase</shortName>
        <ecNumber evidence="1">4.3.1.3</ecNumber>
    </recommendedName>
</protein>
<dbReference type="EC" id="4.3.1.3" evidence="1"/>
<dbReference type="EMBL" id="CP000614">
    <property type="protein sequence ID" value="ABO55249.1"/>
    <property type="molecule type" value="Genomic_DNA"/>
</dbReference>
<dbReference type="SMR" id="A4JG46"/>
<dbReference type="KEGG" id="bvi:Bcep1808_2247"/>
<dbReference type="eggNOG" id="COG2986">
    <property type="taxonomic scope" value="Bacteria"/>
</dbReference>
<dbReference type="HOGENOM" id="CLU_014801_4_0_4"/>
<dbReference type="UniPathway" id="UPA00379">
    <property type="reaction ID" value="UER00549"/>
</dbReference>
<dbReference type="Proteomes" id="UP000002287">
    <property type="component" value="Chromosome 1"/>
</dbReference>
<dbReference type="GO" id="GO:0005737">
    <property type="term" value="C:cytoplasm"/>
    <property type="evidence" value="ECO:0007669"/>
    <property type="project" value="UniProtKB-SubCell"/>
</dbReference>
<dbReference type="GO" id="GO:0004397">
    <property type="term" value="F:histidine ammonia-lyase activity"/>
    <property type="evidence" value="ECO:0007669"/>
    <property type="project" value="UniProtKB-UniRule"/>
</dbReference>
<dbReference type="GO" id="GO:0019556">
    <property type="term" value="P:L-histidine catabolic process to glutamate and formamide"/>
    <property type="evidence" value="ECO:0007669"/>
    <property type="project" value="UniProtKB-UniPathway"/>
</dbReference>
<dbReference type="GO" id="GO:0019557">
    <property type="term" value="P:L-histidine catabolic process to glutamate and formate"/>
    <property type="evidence" value="ECO:0007669"/>
    <property type="project" value="UniProtKB-UniPathway"/>
</dbReference>
<dbReference type="CDD" id="cd00332">
    <property type="entry name" value="PAL-HAL"/>
    <property type="match status" value="1"/>
</dbReference>
<dbReference type="FunFam" id="1.10.275.10:FF:000005">
    <property type="entry name" value="Histidine ammonia-lyase"/>
    <property type="match status" value="1"/>
</dbReference>
<dbReference type="FunFam" id="1.20.200.10:FF:000003">
    <property type="entry name" value="Histidine ammonia-lyase"/>
    <property type="match status" value="1"/>
</dbReference>
<dbReference type="Gene3D" id="1.20.200.10">
    <property type="entry name" value="Fumarase/aspartase (Central domain)"/>
    <property type="match status" value="1"/>
</dbReference>
<dbReference type="Gene3D" id="1.10.275.10">
    <property type="entry name" value="Fumarase/aspartase (N-terminal domain)"/>
    <property type="match status" value="1"/>
</dbReference>
<dbReference type="HAMAP" id="MF_00229">
    <property type="entry name" value="His_ammonia_lyase"/>
    <property type="match status" value="1"/>
</dbReference>
<dbReference type="InterPro" id="IPR001106">
    <property type="entry name" value="Aromatic_Lyase"/>
</dbReference>
<dbReference type="InterPro" id="IPR024083">
    <property type="entry name" value="Fumarase/histidase_N"/>
</dbReference>
<dbReference type="InterPro" id="IPR005921">
    <property type="entry name" value="HutH"/>
</dbReference>
<dbReference type="InterPro" id="IPR008948">
    <property type="entry name" value="L-Aspartase-like"/>
</dbReference>
<dbReference type="InterPro" id="IPR022313">
    <property type="entry name" value="Phe/His_NH3-lyase_AS"/>
</dbReference>
<dbReference type="NCBIfam" id="TIGR01225">
    <property type="entry name" value="hutH"/>
    <property type="match status" value="1"/>
</dbReference>
<dbReference type="NCBIfam" id="NF006871">
    <property type="entry name" value="PRK09367.1"/>
    <property type="match status" value="1"/>
</dbReference>
<dbReference type="PANTHER" id="PTHR10362">
    <property type="entry name" value="HISTIDINE AMMONIA-LYASE"/>
    <property type="match status" value="1"/>
</dbReference>
<dbReference type="Pfam" id="PF00221">
    <property type="entry name" value="Lyase_aromatic"/>
    <property type="match status" value="1"/>
</dbReference>
<dbReference type="SUPFAM" id="SSF48557">
    <property type="entry name" value="L-aspartase-like"/>
    <property type="match status" value="1"/>
</dbReference>
<dbReference type="PROSITE" id="PS00488">
    <property type="entry name" value="PAL_HISTIDASE"/>
    <property type="match status" value="1"/>
</dbReference>
<gene>
    <name evidence="1" type="primary">hutH</name>
    <name type="ordered locus">Bcep1808_2247</name>
</gene>